<reference key="1">
    <citation type="submission" date="1997-05" db="EMBL/GenBank/DDBJ databases">
        <authorList>
            <person name="Pearlman R.E."/>
        </authorList>
    </citation>
    <scope>NUCLEOTIDE SEQUENCE [GENOMIC DNA]</scope>
</reference>
<proteinExistence type="inferred from homology"/>
<evidence type="ECO:0000250" key="1"/>
<evidence type="ECO:0000250" key="2">
    <source>
        <dbReference type="UniProtKB" id="P00558"/>
    </source>
</evidence>
<evidence type="ECO:0000250" key="3">
    <source>
        <dbReference type="UniProtKB" id="Q7SIB7"/>
    </source>
</evidence>
<evidence type="ECO:0000305" key="4"/>
<comment type="catalytic activity">
    <reaction evidence="2">
        <text>(2R)-3-phosphoglycerate + ATP = (2R)-3-phospho-glyceroyl phosphate + ADP</text>
        <dbReference type="Rhea" id="RHEA:14801"/>
        <dbReference type="ChEBI" id="CHEBI:30616"/>
        <dbReference type="ChEBI" id="CHEBI:57604"/>
        <dbReference type="ChEBI" id="CHEBI:58272"/>
        <dbReference type="ChEBI" id="CHEBI:456216"/>
        <dbReference type="EC" id="2.7.2.3"/>
    </reaction>
</comment>
<comment type="cofactor">
    <cofactor evidence="2">
        <name>Mg(2+)</name>
        <dbReference type="ChEBI" id="CHEBI:18420"/>
    </cofactor>
</comment>
<comment type="pathway">
    <text>Carbohydrate degradation; glycolysis; pyruvate from D-glyceraldehyde 3-phosphate: step 2/5.</text>
</comment>
<comment type="subunit">
    <text evidence="1">Monomer.</text>
</comment>
<comment type="similarity">
    <text evidence="4">Belongs to the phosphoglycerate kinase family.</text>
</comment>
<gene>
    <name type="primary">PGK</name>
</gene>
<accession>O00871</accession>
<feature type="chain" id="PRO_0000145860" description="Phosphoglycerate kinase">
    <location>
        <begin position="1" status="less than"/>
        <end position="375" status="greater than"/>
    </location>
</feature>
<feature type="binding site" evidence="2">
    <location>
        <position position="1"/>
    </location>
    <ligand>
        <name>(2R)-3-phosphoglycerate</name>
        <dbReference type="ChEBI" id="CHEBI:58272"/>
    </ligand>
</feature>
<feature type="binding site" evidence="3">
    <location>
        <position position="2"/>
    </location>
    <ligand>
        <name>(2R)-3-phosphoglycerate</name>
        <dbReference type="ChEBI" id="CHEBI:58272"/>
    </ligand>
</feature>
<feature type="binding site" evidence="2">
    <location>
        <position position="3"/>
    </location>
    <ligand>
        <name>(2R)-3-phosphoglycerate</name>
        <dbReference type="ChEBI" id="CHEBI:58272"/>
    </ligand>
</feature>
<feature type="binding site" evidence="3">
    <location>
        <position position="4"/>
    </location>
    <ligand>
        <name>(2R)-3-phosphoglycerate</name>
        <dbReference type="ChEBI" id="CHEBI:58272"/>
    </ligand>
</feature>
<feature type="binding site" evidence="3">
    <location>
        <position position="17"/>
    </location>
    <ligand>
        <name>(2R)-3-phosphoglycerate</name>
        <dbReference type="ChEBI" id="CHEBI:58272"/>
    </ligand>
</feature>
<feature type="binding site" evidence="2">
    <location>
        <position position="40"/>
    </location>
    <ligand>
        <name>(2R)-3-phosphoglycerate</name>
        <dbReference type="ChEBI" id="CHEBI:58272"/>
    </ligand>
</feature>
<feature type="binding site" evidence="3">
    <location>
        <position position="41"/>
    </location>
    <ligand>
        <name>(2R)-3-phosphoglycerate</name>
        <dbReference type="ChEBI" id="CHEBI:58272"/>
    </ligand>
</feature>
<feature type="binding site" evidence="2">
    <location>
        <position position="43"/>
    </location>
    <ligand>
        <name>(2R)-3-phosphoglycerate</name>
        <dbReference type="ChEBI" id="CHEBI:58272"/>
    </ligand>
</feature>
<feature type="binding site" evidence="3">
    <location>
        <position position="44"/>
    </location>
    <ligand>
        <name>(2R)-3-phosphoglycerate</name>
        <dbReference type="ChEBI" id="CHEBI:58272"/>
    </ligand>
</feature>
<feature type="binding site" evidence="2">
    <location>
        <position position="99"/>
    </location>
    <ligand>
        <name>(2R)-3-phosphoglycerate</name>
        <dbReference type="ChEBI" id="CHEBI:58272"/>
    </ligand>
</feature>
<feature type="binding site" evidence="3">
    <location>
        <position position="100"/>
    </location>
    <ligand>
        <name>(2R)-3-phosphoglycerate</name>
        <dbReference type="ChEBI" id="CHEBI:58272"/>
    </ligand>
</feature>
<feature type="binding site" evidence="2">
    <location>
        <position position="147"/>
    </location>
    <ligand>
        <name>(2R)-3-phosphoglycerate</name>
        <dbReference type="ChEBI" id="CHEBI:58272"/>
    </ligand>
</feature>
<feature type="binding site" evidence="3">
    <location>
        <position position="148"/>
    </location>
    <ligand>
        <name>(2R)-3-phosphoglycerate</name>
        <dbReference type="ChEBI" id="CHEBI:58272"/>
    </ligand>
</feature>
<feature type="binding site" evidence="2">
    <location>
        <position position="191"/>
    </location>
    <ligand>
        <name>ADP</name>
        <dbReference type="ChEBI" id="CHEBI:456216"/>
    </ligand>
</feature>
<feature type="binding site" evidence="2">
    <location>
        <position position="191"/>
    </location>
    <ligand>
        <name>CDP</name>
        <dbReference type="ChEBI" id="CHEBI:58069"/>
    </ligand>
</feature>
<feature type="binding site" evidence="3">
    <location>
        <position position="192"/>
    </location>
    <ligand>
        <name>AMP</name>
        <dbReference type="ChEBI" id="CHEBI:456215"/>
    </ligand>
</feature>
<feature type="binding site" evidence="3">
    <location>
        <position position="192"/>
    </location>
    <ligand>
        <name>ATP</name>
        <dbReference type="ChEBI" id="CHEBI:30616"/>
    </ligand>
</feature>
<feature type="binding site" evidence="2">
    <location>
        <position position="192"/>
    </location>
    <ligand>
        <name>Mg(2+)</name>
        <dbReference type="ChEBI" id="CHEBI:18420"/>
    </ligand>
</feature>
<feature type="binding site" evidence="3">
    <location>
        <position position="193"/>
    </location>
    <ligand>
        <name>AMP</name>
        <dbReference type="ChEBI" id="CHEBI:456215"/>
    </ligand>
</feature>
<feature type="binding site" evidence="2">
    <location>
        <position position="196"/>
    </location>
    <ligand>
        <name>CDP</name>
        <dbReference type="ChEBI" id="CHEBI:58069"/>
    </ligand>
</feature>
<feature type="binding site" evidence="2">
    <location>
        <position position="196"/>
    </location>
    <ligand>
        <name>Mg(2+)</name>
        <dbReference type="ChEBI" id="CHEBI:18420"/>
    </ligand>
</feature>
<feature type="binding site" evidence="3">
    <location>
        <position position="197"/>
    </location>
    <ligand>
        <name>AMP</name>
        <dbReference type="ChEBI" id="CHEBI:456215"/>
    </ligand>
</feature>
<feature type="binding site" evidence="3">
    <location>
        <position position="197"/>
    </location>
    <ligand>
        <name>ATP</name>
        <dbReference type="ChEBI" id="CHEBI:30616"/>
    </ligand>
</feature>
<feature type="binding site" evidence="2">
    <location>
        <position position="215"/>
    </location>
    <ligand>
        <name>ADP</name>
        <dbReference type="ChEBI" id="CHEBI:456216"/>
    </ligand>
</feature>
<feature type="binding site" evidence="2">
    <location>
        <position position="215"/>
    </location>
    <ligand>
        <name>CDP</name>
        <dbReference type="ChEBI" id="CHEBI:58069"/>
    </ligand>
</feature>
<feature type="binding site" evidence="3">
    <location>
        <position position="216"/>
    </location>
    <ligand>
        <name>AMP</name>
        <dbReference type="ChEBI" id="CHEBI:456215"/>
    </ligand>
</feature>
<feature type="binding site" evidence="3">
    <location>
        <position position="216"/>
    </location>
    <ligand>
        <name>ATP</name>
        <dbReference type="ChEBI" id="CHEBI:30616"/>
    </ligand>
</feature>
<feature type="binding site" evidence="3">
    <location>
        <position position="290"/>
    </location>
    <ligand>
        <name>AMP</name>
        <dbReference type="ChEBI" id="CHEBI:456215"/>
    </ligand>
</feature>
<feature type="binding site" evidence="3">
    <location>
        <position position="290"/>
    </location>
    <ligand>
        <name>ATP</name>
        <dbReference type="ChEBI" id="CHEBI:30616"/>
    </ligand>
</feature>
<feature type="binding site" evidence="2">
    <location>
        <position position="315"/>
    </location>
    <ligand>
        <name>CDP</name>
        <dbReference type="ChEBI" id="CHEBI:58069"/>
    </ligand>
</feature>
<feature type="binding site" evidence="2">
    <location>
        <position position="320"/>
    </location>
    <ligand>
        <name>ADP</name>
        <dbReference type="ChEBI" id="CHEBI:456216"/>
    </ligand>
</feature>
<feature type="binding site" evidence="2">
    <location>
        <position position="320"/>
    </location>
    <ligand>
        <name>CDP</name>
        <dbReference type="ChEBI" id="CHEBI:58069"/>
    </ligand>
</feature>
<feature type="binding site" evidence="3">
    <location>
        <position position="321"/>
    </location>
    <ligand>
        <name>AMP</name>
        <dbReference type="ChEBI" id="CHEBI:456215"/>
    </ligand>
</feature>
<feature type="binding site" evidence="3">
    <location>
        <position position="321"/>
    </location>
    <ligand>
        <name>ATP</name>
        <dbReference type="ChEBI" id="CHEBI:30616"/>
    </ligand>
</feature>
<feature type="binding site" evidence="3">
    <location>
        <position position="352"/>
    </location>
    <ligand>
        <name>ATP</name>
        <dbReference type="ChEBI" id="CHEBI:30616"/>
    </ligand>
</feature>
<feature type="binding site" evidence="3">
    <location>
        <position position="352"/>
    </location>
    <ligand>
        <name>Mg(2+)</name>
        <dbReference type="ChEBI" id="CHEBI:18420"/>
    </ligand>
</feature>
<feature type="binding site" evidence="3">
    <location>
        <position position="353"/>
    </location>
    <ligand>
        <name>ATP</name>
        <dbReference type="ChEBI" id="CHEBI:30616"/>
    </ligand>
</feature>
<feature type="non-terminal residue">
    <location>
        <position position="1"/>
    </location>
</feature>
<feature type="non-terminal residue">
    <location>
        <position position="375"/>
    </location>
</feature>
<dbReference type="EC" id="2.7.2.3" evidence="2"/>
<dbReference type="EMBL" id="AF001851">
    <property type="protein sequence ID" value="AAB58243.1"/>
    <property type="molecule type" value="Genomic_DNA"/>
</dbReference>
<dbReference type="SMR" id="O00871"/>
<dbReference type="UniPathway" id="UPA00109">
    <property type="reaction ID" value="UER00185"/>
</dbReference>
<dbReference type="GO" id="GO:0005829">
    <property type="term" value="C:cytosol"/>
    <property type="evidence" value="ECO:0007669"/>
    <property type="project" value="TreeGrafter"/>
</dbReference>
<dbReference type="GO" id="GO:0043531">
    <property type="term" value="F:ADP binding"/>
    <property type="evidence" value="ECO:0007669"/>
    <property type="project" value="TreeGrafter"/>
</dbReference>
<dbReference type="GO" id="GO:0005524">
    <property type="term" value="F:ATP binding"/>
    <property type="evidence" value="ECO:0007669"/>
    <property type="project" value="UniProtKB-KW"/>
</dbReference>
<dbReference type="GO" id="GO:0046872">
    <property type="term" value="F:metal ion binding"/>
    <property type="evidence" value="ECO:0007669"/>
    <property type="project" value="UniProtKB-KW"/>
</dbReference>
<dbReference type="GO" id="GO:0004618">
    <property type="term" value="F:phosphoglycerate kinase activity"/>
    <property type="evidence" value="ECO:0007669"/>
    <property type="project" value="UniProtKB-EC"/>
</dbReference>
<dbReference type="GO" id="GO:0006094">
    <property type="term" value="P:gluconeogenesis"/>
    <property type="evidence" value="ECO:0007669"/>
    <property type="project" value="TreeGrafter"/>
</dbReference>
<dbReference type="GO" id="GO:0006096">
    <property type="term" value="P:glycolytic process"/>
    <property type="evidence" value="ECO:0007669"/>
    <property type="project" value="UniProtKB-UniPathway"/>
</dbReference>
<dbReference type="CDD" id="cd00318">
    <property type="entry name" value="Phosphoglycerate_kinase"/>
    <property type="match status" value="1"/>
</dbReference>
<dbReference type="FunFam" id="3.40.50.1260:FF:000003">
    <property type="entry name" value="Phosphoglycerate kinase"/>
    <property type="match status" value="1"/>
</dbReference>
<dbReference type="FunFam" id="3.40.50.1260:FF:000006">
    <property type="entry name" value="Phosphoglycerate kinase"/>
    <property type="match status" value="1"/>
</dbReference>
<dbReference type="Gene3D" id="3.40.50.1260">
    <property type="entry name" value="Phosphoglycerate kinase, N-terminal domain"/>
    <property type="match status" value="3"/>
</dbReference>
<dbReference type="InterPro" id="IPR001576">
    <property type="entry name" value="Phosphoglycerate_kinase"/>
</dbReference>
<dbReference type="InterPro" id="IPR015824">
    <property type="entry name" value="Phosphoglycerate_kinase_N"/>
</dbReference>
<dbReference type="InterPro" id="IPR036043">
    <property type="entry name" value="Phosphoglycerate_kinase_sf"/>
</dbReference>
<dbReference type="PANTHER" id="PTHR11406">
    <property type="entry name" value="PHOSPHOGLYCERATE KINASE"/>
    <property type="match status" value="1"/>
</dbReference>
<dbReference type="PANTHER" id="PTHR11406:SF0">
    <property type="entry name" value="PHOSPHOGLYCERATE KINASE"/>
    <property type="match status" value="1"/>
</dbReference>
<dbReference type="Pfam" id="PF00162">
    <property type="entry name" value="PGK"/>
    <property type="match status" value="1"/>
</dbReference>
<dbReference type="PIRSF" id="PIRSF000724">
    <property type="entry name" value="Pgk"/>
    <property type="match status" value="1"/>
</dbReference>
<dbReference type="PRINTS" id="PR00477">
    <property type="entry name" value="PHGLYCKINASE"/>
</dbReference>
<dbReference type="SUPFAM" id="SSF53748">
    <property type="entry name" value="Phosphoglycerate kinase"/>
    <property type="match status" value="1"/>
</dbReference>
<name>PGK_TETPY</name>
<sequence length="375" mass="40673">VDFNVPLKDGQVKDPTRIQGSIPSIKKILEQNPKGLVLMSHLGRPDGNRVEKHSMKPVVPKLEQLLGTKVKFLNDCVGKDVEEAVKSSRNGEIILLENLRFHAEEEGKSIDAAGNKVKADPKAVKEFRKSLTSLGDLYVNDAFGTAHRAHSSMVGVDHKIRAAGYLLKKELDYFSKALESPNRPFLVVLGGAKVKDKIQLIESMIDKVDEMIIGGGMAFTFLKRIHNMEIGNSLFDEEGYKIVDQLLEKAKAKGVKIHLPVDFLCGDSLEANANTQIHDLISGIPKGWIGLDAGPKTIALNADAVARANTIVWNGPQGRFEVDKFRQGSADLLKRVSARTAAGATSIIGGGDTVNLVQQEKATDKVSHVSTGGGE</sequence>
<organism>
    <name type="scientific">Tetrahymena pyriformis</name>
    <dbReference type="NCBI Taxonomy" id="5908"/>
    <lineage>
        <taxon>Eukaryota</taxon>
        <taxon>Sar</taxon>
        <taxon>Alveolata</taxon>
        <taxon>Ciliophora</taxon>
        <taxon>Intramacronucleata</taxon>
        <taxon>Oligohymenophorea</taxon>
        <taxon>Hymenostomatida</taxon>
        <taxon>Tetrahymenina</taxon>
        <taxon>Tetrahymenidae</taxon>
        <taxon>Tetrahymena</taxon>
    </lineage>
</organism>
<keyword id="KW-0067">ATP-binding</keyword>
<keyword id="KW-0324">Glycolysis</keyword>
<keyword id="KW-0418">Kinase</keyword>
<keyword id="KW-0460">Magnesium</keyword>
<keyword id="KW-0479">Metal-binding</keyword>
<keyword id="KW-0547">Nucleotide-binding</keyword>
<keyword id="KW-0808">Transferase</keyword>
<protein>
    <recommendedName>
        <fullName>Phosphoglycerate kinase</fullName>
        <ecNumber evidence="2">2.7.2.3</ecNumber>
    </recommendedName>
</protein>